<name>RAA1F_ARATH</name>
<accession>Q9FJH0</accession>
<reference key="1">
    <citation type="journal article" date="1998" name="DNA Res.">
        <title>Structural analysis of Arabidopsis thaliana chromosome 5. VII. Sequence features of the regions of 1,013,767 bp covered by sixteen physically assigned P1 and TAC clones.</title>
        <authorList>
            <person name="Nakamura Y."/>
            <person name="Sato S."/>
            <person name="Asamizu E."/>
            <person name="Kaneko T."/>
            <person name="Kotani H."/>
            <person name="Miyajima N."/>
            <person name="Tabata S."/>
        </authorList>
    </citation>
    <scope>NUCLEOTIDE SEQUENCE [LARGE SCALE GENOMIC DNA]</scope>
    <source>
        <strain>cv. Columbia</strain>
    </source>
</reference>
<reference key="2">
    <citation type="journal article" date="2017" name="Plant J.">
        <title>Araport11: a complete reannotation of the Arabidopsis thaliana reference genome.</title>
        <authorList>
            <person name="Cheng C.Y."/>
            <person name="Krishnakumar V."/>
            <person name="Chan A.P."/>
            <person name="Thibaud-Nissen F."/>
            <person name="Schobel S."/>
            <person name="Town C.D."/>
        </authorList>
    </citation>
    <scope>GENOME REANNOTATION</scope>
    <source>
        <strain>cv. Columbia</strain>
    </source>
</reference>
<reference key="3">
    <citation type="journal article" date="2002" name="Science">
        <title>Functional annotation of a full-length Arabidopsis cDNA collection.</title>
        <authorList>
            <person name="Seki M."/>
            <person name="Narusaka M."/>
            <person name="Kamiya A."/>
            <person name="Ishida J."/>
            <person name="Satou M."/>
            <person name="Sakurai T."/>
            <person name="Nakajima M."/>
            <person name="Enju A."/>
            <person name="Akiyama K."/>
            <person name="Oono Y."/>
            <person name="Muramatsu M."/>
            <person name="Hayashizaki Y."/>
            <person name="Kawai J."/>
            <person name="Carninci P."/>
            <person name="Itoh M."/>
            <person name="Ishii Y."/>
            <person name="Arakawa T."/>
            <person name="Shibata K."/>
            <person name="Shinagawa A."/>
            <person name="Shinozaki K."/>
        </authorList>
    </citation>
    <scope>NUCLEOTIDE SEQUENCE [LARGE SCALE MRNA]</scope>
    <source>
        <strain>cv. Columbia</strain>
    </source>
</reference>
<reference key="4">
    <citation type="journal article" date="2003" name="Science">
        <title>Empirical analysis of transcriptional activity in the Arabidopsis genome.</title>
        <authorList>
            <person name="Yamada K."/>
            <person name="Lim J."/>
            <person name="Dale J.M."/>
            <person name="Chen H."/>
            <person name="Shinn P."/>
            <person name="Palm C.J."/>
            <person name="Southwick A.M."/>
            <person name="Wu H.C."/>
            <person name="Kim C.J."/>
            <person name="Nguyen M."/>
            <person name="Pham P.K."/>
            <person name="Cheuk R.F."/>
            <person name="Karlin-Newmann G."/>
            <person name="Liu S.X."/>
            <person name="Lam B."/>
            <person name="Sakano H."/>
            <person name="Wu T."/>
            <person name="Yu G."/>
            <person name="Miranda M."/>
            <person name="Quach H.L."/>
            <person name="Tripp M."/>
            <person name="Chang C.H."/>
            <person name="Lee J.M."/>
            <person name="Toriumi M.J."/>
            <person name="Chan M.M."/>
            <person name="Tang C.C."/>
            <person name="Onodera C.S."/>
            <person name="Deng J.M."/>
            <person name="Akiyama K."/>
            <person name="Ansari Y."/>
            <person name="Arakawa T."/>
            <person name="Banh J."/>
            <person name="Banno F."/>
            <person name="Bowser L."/>
            <person name="Brooks S.Y."/>
            <person name="Carninci P."/>
            <person name="Chao Q."/>
            <person name="Choy N."/>
            <person name="Enju A."/>
            <person name="Goldsmith A.D."/>
            <person name="Gurjal M."/>
            <person name="Hansen N.F."/>
            <person name="Hayashizaki Y."/>
            <person name="Johnson-Hopson C."/>
            <person name="Hsuan V.W."/>
            <person name="Iida K."/>
            <person name="Karnes M."/>
            <person name="Khan S."/>
            <person name="Koesema E."/>
            <person name="Ishida J."/>
            <person name="Jiang P.X."/>
            <person name="Jones T."/>
            <person name="Kawai J."/>
            <person name="Kamiya A."/>
            <person name="Meyers C."/>
            <person name="Nakajima M."/>
            <person name="Narusaka M."/>
            <person name="Seki M."/>
            <person name="Sakurai T."/>
            <person name="Satou M."/>
            <person name="Tamse R."/>
            <person name="Vaysberg M."/>
            <person name="Wallender E.K."/>
            <person name="Wong C."/>
            <person name="Yamamura Y."/>
            <person name="Yuan S."/>
            <person name="Shinozaki K."/>
            <person name="Davis R.W."/>
            <person name="Theologis A."/>
            <person name="Ecker J.R."/>
        </authorList>
    </citation>
    <scope>NUCLEOTIDE SEQUENCE [LARGE SCALE MRNA]</scope>
    <source>
        <strain>cv. Columbia</strain>
    </source>
</reference>
<reference key="5">
    <citation type="journal article" date="2003" name="Plant Physiol.">
        <title>Analysis of the small GTPase gene superfamily of Arabidopsis.</title>
        <authorList>
            <person name="Vernoud V."/>
            <person name="Horton A.C."/>
            <person name="Yang Z."/>
            <person name="Nielsen E."/>
        </authorList>
    </citation>
    <scope>GENE FAMILY</scope>
    <scope>NOMENCLATURE</scope>
</reference>
<feature type="chain" id="PRO_0000407337" description="Ras-related protein RABA1f">
    <location>
        <begin position="1"/>
        <end position="217"/>
    </location>
</feature>
<feature type="short sequence motif" description="Effector region" evidence="1">
    <location>
        <begin position="42"/>
        <end position="50"/>
    </location>
</feature>
<feature type="binding site" evidence="1">
    <location>
        <begin position="20"/>
        <end position="27"/>
    </location>
    <ligand>
        <name>GTP</name>
        <dbReference type="ChEBI" id="CHEBI:37565"/>
    </ligand>
</feature>
<feature type="binding site" evidence="1">
    <location>
        <begin position="68"/>
        <end position="72"/>
    </location>
    <ligand>
        <name>GTP</name>
        <dbReference type="ChEBI" id="CHEBI:37565"/>
    </ligand>
</feature>
<feature type="binding site" evidence="1">
    <location>
        <begin position="126"/>
        <end position="129"/>
    </location>
    <ligand>
        <name>GTP</name>
        <dbReference type="ChEBI" id="CHEBI:37565"/>
    </ligand>
</feature>
<feature type="binding site" evidence="1">
    <location>
        <begin position="156"/>
        <end position="157"/>
    </location>
    <ligand>
        <name>GTP</name>
        <dbReference type="ChEBI" id="CHEBI:37565"/>
    </ligand>
</feature>
<feature type="lipid moiety-binding region" description="S-geranylgeranyl cysteine" evidence="1">
    <location>
        <position position="214"/>
    </location>
</feature>
<feature type="lipid moiety-binding region" description="S-geranylgeranyl cysteine" evidence="1">
    <location>
        <position position="215"/>
    </location>
</feature>
<dbReference type="EMBL" id="AB015472">
    <property type="protein sequence ID" value="BAB10106.1"/>
    <property type="molecule type" value="Genomic_DNA"/>
</dbReference>
<dbReference type="EMBL" id="CP002688">
    <property type="protein sequence ID" value="AED97387.1"/>
    <property type="molecule type" value="Genomic_DNA"/>
</dbReference>
<dbReference type="EMBL" id="AK118670">
    <property type="protein sequence ID" value="BAC43265.1"/>
    <property type="molecule type" value="mRNA"/>
</dbReference>
<dbReference type="EMBL" id="BT005238">
    <property type="protein sequence ID" value="AAO63302.1"/>
    <property type="molecule type" value="mRNA"/>
</dbReference>
<dbReference type="RefSeq" id="NP_200894.1">
    <property type="nucleotide sequence ID" value="NM_125479.4"/>
</dbReference>
<dbReference type="SMR" id="Q9FJH0"/>
<dbReference type="BioGRID" id="21451">
    <property type="interactions" value="3"/>
</dbReference>
<dbReference type="FunCoup" id="Q9FJH0">
    <property type="interactions" value="3082"/>
</dbReference>
<dbReference type="IntAct" id="Q9FJH0">
    <property type="interactions" value="3"/>
</dbReference>
<dbReference type="STRING" id="3702.Q9FJH0"/>
<dbReference type="iPTMnet" id="Q9FJH0"/>
<dbReference type="PaxDb" id="3702-AT5G60860.1"/>
<dbReference type="ProteomicsDB" id="224876"/>
<dbReference type="EnsemblPlants" id="AT5G60860.1">
    <property type="protein sequence ID" value="AT5G60860.1"/>
    <property type="gene ID" value="AT5G60860"/>
</dbReference>
<dbReference type="GeneID" id="836207"/>
<dbReference type="Gramene" id="AT5G60860.1">
    <property type="protein sequence ID" value="AT5G60860.1"/>
    <property type="gene ID" value="AT5G60860"/>
</dbReference>
<dbReference type="KEGG" id="ath:AT5G60860"/>
<dbReference type="Araport" id="AT5G60860"/>
<dbReference type="TAIR" id="AT5G60860">
    <property type="gene designation" value="RABA1F"/>
</dbReference>
<dbReference type="eggNOG" id="KOG0087">
    <property type="taxonomic scope" value="Eukaryota"/>
</dbReference>
<dbReference type="HOGENOM" id="CLU_041217_23_0_1"/>
<dbReference type="InParanoid" id="Q9FJH0"/>
<dbReference type="OMA" id="ITAIYQM"/>
<dbReference type="OrthoDB" id="9989112at2759"/>
<dbReference type="PhylomeDB" id="Q9FJH0"/>
<dbReference type="PRO" id="PR:Q9FJH0"/>
<dbReference type="Proteomes" id="UP000006548">
    <property type="component" value="Chromosome 5"/>
</dbReference>
<dbReference type="ExpressionAtlas" id="Q9FJH0">
    <property type="expression patterns" value="baseline and differential"/>
</dbReference>
<dbReference type="GO" id="GO:0005886">
    <property type="term" value="C:plasma membrane"/>
    <property type="evidence" value="ECO:0007669"/>
    <property type="project" value="UniProtKB-SubCell"/>
</dbReference>
<dbReference type="GO" id="GO:0005525">
    <property type="term" value="F:GTP binding"/>
    <property type="evidence" value="ECO:0007669"/>
    <property type="project" value="UniProtKB-KW"/>
</dbReference>
<dbReference type="GO" id="GO:0003924">
    <property type="term" value="F:GTPase activity"/>
    <property type="evidence" value="ECO:0007669"/>
    <property type="project" value="InterPro"/>
</dbReference>
<dbReference type="GO" id="GO:0015031">
    <property type="term" value="P:protein transport"/>
    <property type="evidence" value="ECO:0007669"/>
    <property type="project" value="UniProtKB-KW"/>
</dbReference>
<dbReference type="CDD" id="cd01868">
    <property type="entry name" value="Rab11_like"/>
    <property type="match status" value="1"/>
</dbReference>
<dbReference type="FunFam" id="3.40.50.300:FF:000067">
    <property type="entry name" value="ras-related protein RABA1f"/>
    <property type="match status" value="1"/>
</dbReference>
<dbReference type="Gene3D" id="3.40.50.300">
    <property type="entry name" value="P-loop containing nucleotide triphosphate hydrolases"/>
    <property type="match status" value="1"/>
</dbReference>
<dbReference type="InterPro" id="IPR027417">
    <property type="entry name" value="P-loop_NTPase"/>
</dbReference>
<dbReference type="InterPro" id="IPR050209">
    <property type="entry name" value="Rab_GTPases_membrane_traffic"/>
</dbReference>
<dbReference type="InterPro" id="IPR005225">
    <property type="entry name" value="Small_GTP-bd"/>
</dbReference>
<dbReference type="InterPro" id="IPR001806">
    <property type="entry name" value="Small_GTPase"/>
</dbReference>
<dbReference type="NCBIfam" id="TIGR00231">
    <property type="entry name" value="small_GTP"/>
    <property type="match status" value="1"/>
</dbReference>
<dbReference type="PANTHER" id="PTHR47979">
    <property type="entry name" value="DRAB11-RELATED"/>
    <property type="match status" value="1"/>
</dbReference>
<dbReference type="Pfam" id="PF00071">
    <property type="entry name" value="Ras"/>
    <property type="match status" value="1"/>
</dbReference>
<dbReference type="PRINTS" id="PR00449">
    <property type="entry name" value="RASTRNSFRMNG"/>
</dbReference>
<dbReference type="SMART" id="SM00175">
    <property type="entry name" value="RAB"/>
    <property type="match status" value="1"/>
</dbReference>
<dbReference type="SMART" id="SM00176">
    <property type="entry name" value="RAN"/>
    <property type="match status" value="1"/>
</dbReference>
<dbReference type="SMART" id="SM00173">
    <property type="entry name" value="RAS"/>
    <property type="match status" value="1"/>
</dbReference>
<dbReference type="SMART" id="SM00174">
    <property type="entry name" value="RHO"/>
    <property type="match status" value="1"/>
</dbReference>
<dbReference type="SUPFAM" id="SSF52540">
    <property type="entry name" value="P-loop containing nucleoside triphosphate hydrolases"/>
    <property type="match status" value="1"/>
</dbReference>
<dbReference type="PROSITE" id="PS51419">
    <property type="entry name" value="RAB"/>
    <property type="match status" value="1"/>
</dbReference>
<gene>
    <name type="primary">RABA1F</name>
    <name type="ordered locus">At5g60860</name>
    <name type="ORF">MAE1.9</name>
</gene>
<protein>
    <recommendedName>
        <fullName>Ras-related protein RABA1f</fullName>
        <shortName>AtRABA1f</shortName>
    </recommendedName>
</protein>
<evidence type="ECO:0000250" key="1"/>
<evidence type="ECO:0000305" key="2"/>
<organism>
    <name type="scientific">Arabidopsis thaliana</name>
    <name type="common">Mouse-ear cress</name>
    <dbReference type="NCBI Taxonomy" id="3702"/>
    <lineage>
        <taxon>Eukaryota</taxon>
        <taxon>Viridiplantae</taxon>
        <taxon>Streptophyta</taxon>
        <taxon>Embryophyta</taxon>
        <taxon>Tracheophyta</taxon>
        <taxon>Spermatophyta</taxon>
        <taxon>Magnoliopsida</taxon>
        <taxon>eudicotyledons</taxon>
        <taxon>Gunneridae</taxon>
        <taxon>Pentapetalae</taxon>
        <taxon>rosids</taxon>
        <taxon>malvids</taxon>
        <taxon>Brassicales</taxon>
        <taxon>Brassicaceae</taxon>
        <taxon>Camelineae</taxon>
        <taxon>Arabidopsis</taxon>
    </lineage>
</organism>
<sequence length="217" mass="24276">MAAYRADDEYDYLFKVVLIGDSGVGKSNLLSRFTRNEFSLESKSTIGVEFATRSIHVDDKIVKAQIWDTAGQERYRAITSAYYRGAVGALLVYDVTRHVTFENVERWLKELRDHTDANIVIMFVGNKADLRHLRAVSTEDAKAFAERENTFFMETSALESMNVENAFTEVLSQIYRVVSRKALDIGDDPAALPKGQTINVGSKDDVSAVKKVGCCSN</sequence>
<keyword id="KW-1003">Cell membrane</keyword>
<keyword id="KW-0342">GTP-binding</keyword>
<keyword id="KW-0449">Lipoprotein</keyword>
<keyword id="KW-0472">Membrane</keyword>
<keyword id="KW-0547">Nucleotide-binding</keyword>
<keyword id="KW-0636">Prenylation</keyword>
<keyword id="KW-0653">Protein transport</keyword>
<keyword id="KW-1185">Reference proteome</keyword>
<keyword id="KW-0813">Transport</keyword>
<proteinExistence type="evidence at transcript level"/>
<comment type="function">
    <text evidence="1">Intracellular vesicle trafficking and protein transport.</text>
</comment>
<comment type="subcellular location">
    <subcellularLocation>
        <location evidence="2">Cell membrane</location>
        <topology evidence="2">Lipid-anchor</topology>
        <orientation evidence="2">Cytoplasmic side</orientation>
    </subcellularLocation>
</comment>
<comment type="similarity">
    <text evidence="2">Belongs to the small GTPase superfamily. Rab family.</text>
</comment>